<sequence>MTEIVEIFTDGACRGNPGPGGWGALLCYQGREKTLSGAESKTTNNRMELMAAIRALETLKRPCRVHLTTDSQYLRQGITCWLSNWKRRGWKTANRQPVKNIDLWQRLDQVAAQHRIEWFWVRGHEGHPGNERADALARSAITNGEEK</sequence>
<comment type="function">
    <text evidence="1">Endonuclease that specifically degrades the RNA of RNA-DNA hybrids.</text>
</comment>
<comment type="catalytic activity">
    <reaction evidence="1">
        <text>Endonucleolytic cleavage to 5'-phosphomonoester.</text>
        <dbReference type="EC" id="3.1.26.4"/>
    </reaction>
</comment>
<comment type="cofactor">
    <cofactor evidence="1">
        <name>Mg(2+)</name>
        <dbReference type="ChEBI" id="CHEBI:18420"/>
    </cofactor>
    <text evidence="1">Binds 1 Mg(2+) ion per subunit. May bind a second metal ion at a regulatory site, or after substrate binding.</text>
</comment>
<comment type="subunit">
    <text evidence="1">Monomer.</text>
</comment>
<comment type="subcellular location">
    <subcellularLocation>
        <location evidence="1">Cytoplasm</location>
    </subcellularLocation>
</comment>
<comment type="similarity">
    <text evidence="1">Belongs to the RNase H family.</text>
</comment>
<dbReference type="EC" id="3.1.26.4" evidence="1"/>
<dbReference type="EMBL" id="CP000127">
    <property type="protein sequence ID" value="ABA59262.1"/>
    <property type="molecule type" value="Genomic_DNA"/>
</dbReference>
<dbReference type="RefSeq" id="WP_002812829.1">
    <property type="nucleotide sequence ID" value="NC_007484.1"/>
</dbReference>
<dbReference type="SMR" id="Q3J7D4"/>
<dbReference type="FunCoup" id="Q3J7D4">
    <property type="interactions" value="238"/>
</dbReference>
<dbReference type="STRING" id="323261.Noc_2815"/>
<dbReference type="KEGG" id="noc:Noc_2815"/>
<dbReference type="eggNOG" id="COG0328">
    <property type="taxonomic scope" value="Bacteria"/>
</dbReference>
<dbReference type="HOGENOM" id="CLU_030894_6_0_6"/>
<dbReference type="InParanoid" id="Q3J7D4"/>
<dbReference type="Proteomes" id="UP000006838">
    <property type="component" value="Chromosome"/>
</dbReference>
<dbReference type="GO" id="GO:0005737">
    <property type="term" value="C:cytoplasm"/>
    <property type="evidence" value="ECO:0007669"/>
    <property type="project" value="UniProtKB-SubCell"/>
</dbReference>
<dbReference type="GO" id="GO:0000287">
    <property type="term" value="F:magnesium ion binding"/>
    <property type="evidence" value="ECO:0007669"/>
    <property type="project" value="UniProtKB-UniRule"/>
</dbReference>
<dbReference type="GO" id="GO:0003676">
    <property type="term" value="F:nucleic acid binding"/>
    <property type="evidence" value="ECO:0007669"/>
    <property type="project" value="InterPro"/>
</dbReference>
<dbReference type="GO" id="GO:0004523">
    <property type="term" value="F:RNA-DNA hybrid ribonuclease activity"/>
    <property type="evidence" value="ECO:0007669"/>
    <property type="project" value="UniProtKB-UniRule"/>
</dbReference>
<dbReference type="GO" id="GO:0043137">
    <property type="term" value="P:DNA replication, removal of RNA primer"/>
    <property type="evidence" value="ECO:0007669"/>
    <property type="project" value="TreeGrafter"/>
</dbReference>
<dbReference type="CDD" id="cd09278">
    <property type="entry name" value="RNase_HI_prokaryote_like"/>
    <property type="match status" value="1"/>
</dbReference>
<dbReference type="FunFam" id="3.30.420.10:FF:000008">
    <property type="entry name" value="Ribonuclease H"/>
    <property type="match status" value="1"/>
</dbReference>
<dbReference type="Gene3D" id="3.30.420.10">
    <property type="entry name" value="Ribonuclease H-like superfamily/Ribonuclease H"/>
    <property type="match status" value="1"/>
</dbReference>
<dbReference type="HAMAP" id="MF_00042">
    <property type="entry name" value="RNase_H"/>
    <property type="match status" value="1"/>
</dbReference>
<dbReference type="InterPro" id="IPR050092">
    <property type="entry name" value="RNase_H"/>
</dbReference>
<dbReference type="InterPro" id="IPR012337">
    <property type="entry name" value="RNaseH-like_sf"/>
</dbReference>
<dbReference type="InterPro" id="IPR002156">
    <property type="entry name" value="RNaseH_domain"/>
</dbReference>
<dbReference type="InterPro" id="IPR036397">
    <property type="entry name" value="RNaseH_sf"/>
</dbReference>
<dbReference type="InterPro" id="IPR022892">
    <property type="entry name" value="RNaseHI"/>
</dbReference>
<dbReference type="NCBIfam" id="NF001236">
    <property type="entry name" value="PRK00203.1"/>
    <property type="match status" value="1"/>
</dbReference>
<dbReference type="PANTHER" id="PTHR10642">
    <property type="entry name" value="RIBONUCLEASE H1"/>
    <property type="match status" value="1"/>
</dbReference>
<dbReference type="PANTHER" id="PTHR10642:SF26">
    <property type="entry name" value="RIBONUCLEASE H1"/>
    <property type="match status" value="1"/>
</dbReference>
<dbReference type="Pfam" id="PF00075">
    <property type="entry name" value="RNase_H"/>
    <property type="match status" value="1"/>
</dbReference>
<dbReference type="SUPFAM" id="SSF53098">
    <property type="entry name" value="Ribonuclease H-like"/>
    <property type="match status" value="1"/>
</dbReference>
<dbReference type="PROSITE" id="PS50879">
    <property type="entry name" value="RNASE_H_1"/>
    <property type="match status" value="1"/>
</dbReference>
<accession>Q3J7D4</accession>
<protein>
    <recommendedName>
        <fullName evidence="1">Ribonuclease H</fullName>
        <shortName evidence="1">RNase H</shortName>
        <ecNumber evidence="1">3.1.26.4</ecNumber>
    </recommendedName>
</protein>
<reference key="1">
    <citation type="journal article" date="2006" name="Appl. Environ. Microbiol.">
        <title>Complete genome sequence of the marine, chemolithoautotrophic, ammonia-oxidizing bacterium Nitrosococcus oceani ATCC 19707.</title>
        <authorList>
            <person name="Klotz M.G."/>
            <person name="Arp D.J."/>
            <person name="Chain P.S.G."/>
            <person name="El-Sheikh A.F."/>
            <person name="Hauser L.J."/>
            <person name="Hommes N.G."/>
            <person name="Larimer F.W."/>
            <person name="Malfatti S.A."/>
            <person name="Norton J.M."/>
            <person name="Poret-Peterson A.T."/>
            <person name="Vergez L.M."/>
            <person name="Ward B.B."/>
        </authorList>
    </citation>
    <scope>NUCLEOTIDE SEQUENCE [LARGE SCALE GENOMIC DNA]</scope>
    <source>
        <strain>ATCC 19707 / BCRC 17464 / JCM 30415 / NCIMB 11848 / C-107</strain>
    </source>
</reference>
<organism>
    <name type="scientific">Nitrosococcus oceani (strain ATCC 19707 / BCRC 17464 / JCM 30415 / NCIMB 11848 / C-107)</name>
    <dbReference type="NCBI Taxonomy" id="323261"/>
    <lineage>
        <taxon>Bacteria</taxon>
        <taxon>Pseudomonadati</taxon>
        <taxon>Pseudomonadota</taxon>
        <taxon>Gammaproteobacteria</taxon>
        <taxon>Chromatiales</taxon>
        <taxon>Chromatiaceae</taxon>
        <taxon>Nitrosococcus</taxon>
    </lineage>
</organism>
<feature type="chain" id="PRO_0000332634" description="Ribonuclease H">
    <location>
        <begin position="1"/>
        <end position="147"/>
    </location>
</feature>
<feature type="domain" description="RNase H type-1" evidence="2">
    <location>
        <begin position="1"/>
        <end position="142"/>
    </location>
</feature>
<feature type="binding site" evidence="1">
    <location>
        <position position="10"/>
    </location>
    <ligand>
        <name>Mg(2+)</name>
        <dbReference type="ChEBI" id="CHEBI:18420"/>
        <label>1</label>
    </ligand>
</feature>
<feature type="binding site" evidence="1">
    <location>
        <position position="10"/>
    </location>
    <ligand>
        <name>Mg(2+)</name>
        <dbReference type="ChEBI" id="CHEBI:18420"/>
        <label>2</label>
    </ligand>
</feature>
<feature type="binding site" evidence="1">
    <location>
        <position position="48"/>
    </location>
    <ligand>
        <name>Mg(2+)</name>
        <dbReference type="ChEBI" id="CHEBI:18420"/>
        <label>1</label>
    </ligand>
</feature>
<feature type="binding site" evidence="1">
    <location>
        <position position="70"/>
    </location>
    <ligand>
        <name>Mg(2+)</name>
        <dbReference type="ChEBI" id="CHEBI:18420"/>
        <label>1</label>
    </ligand>
</feature>
<feature type="binding site" evidence="1">
    <location>
        <position position="134"/>
    </location>
    <ligand>
        <name>Mg(2+)</name>
        <dbReference type="ChEBI" id="CHEBI:18420"/>
        <label>2</label>
    </ligand>
</feature>
<evidence type="ECO:0000255" key="1">
    <source>
        <dbReference type="HAMAP-Rule" id="MF_00042"/>
    </source>
</evidence>
<evidence type="ECO:0000255" key="2">
    <source>
        <dbReference type="PROSITE-ProRule" id="PRU00408"/>
    </source>
</evidence>
<gene>
    <name evidence="1" type="primary">rnhA</name>
    <name type="ordered locus">Noc_2815</name>
</gene>
<keyword id="KW-0963">Cytoplasm</keyword>
<keyword id="KW-0255">Endonuclease</keyword>
<keyword id="KW-0378">Hydrolase</keyword>
<keyword id="KW-0460">Magnesium</keyword>
<keyword id="KW-0479">Metal-binding</keyword>
<keyword id="KW-0540">Nuclease</keyword>
<keyword id="KW-1185">Reference proteome</keyword>
<proteinExistence type="inferred from homology"/>
<name>RNH_NITOC</name>